<organism>
    <name type="scientific">Chlamydia pneumoniae</name>
    <name type="common">Chlamydophila pneumoniae</name>
    <dbReference type="NCBI Taxonomy" id="83558"/>
    <lineage>
        <taxon>Bacteria</taxon>
        <taxon>Pseudomonadati</taxon>
        <taxon>Chlamydiota</taxon>
        <taxon>Chlamydiia</taxon>
        <taxon>Chlamydiales</taxon>
        <taxon>Chlamydiaceae</taxon>
        <taxon>Chlamydia/Chlamydophila group</taxon>
        <taxon>Chlamydia</taxon>
    </lineage>
</organism>
<keyword id="KW-0004">4Fe-4S</keyword>
<keyword id="KW-0408">Iron</keyword>
<keyword id="KW-0411">Iron-sulfur</keyword>
<keyword id="KW-0479">Metal-binding</keyword>
<keyword id="KW-0489">Methyltransferase</keyword>
<keyword id="KW-0949">S-adenosyl-L-methionine</keyword>
<keyword id="KW-0808">Transferase</keyword>
<sequence>MSTMQNCPHFGVCGGCSFPQSNYSDSLKKKEELLHQLFAPLVPSDMIAPIIPCSPSLRGRNKMEFSFFQTYEGEKSLGFISSTKPKKGIPVTTCLLIHEQTMDILKLTREWWDKHPELMAYFPPKNKGSLCTLTVRTGSPQQNFMVILTTSGTPEYRVNEACIDEWKEILLSSSLNIASIYWEEKVAARGISTYYETKLLYGAPSIQQKLSLPSDGNSASFSLRPRSFFQPQITQAAKIIETAKEFINPEGSETLLDLYCGAGTIGIMLSPYVKNVIGVEIIPDAVASAQENIKANNKEDCVEVYLEDAKAFCKRNENCKAPDVIIIDPPRCGMQSKVLKYILRIGSPKIVYISCNPKTQFQECADLISGGYRIKKMQPIDQFPYSTHLENIILLEREIDL</sequence>
<reference key="1">
    <citation type="journal article" date="1999" name="Nat. Genet.">
        <title>Comparative genomes of Chlamydia pneumoniae and C. trachomatis.</title>
        <authorList>
            <person name="Kalman S."/>
            <person name="Mitchell W.P."/>
            <person name="Marathe R."/>
            <person name="Lammel C.J."/>
            <person name="Fan J."/>
            <person name="Hyman R.W."/>
            <person name="Olinger L."/>
            <person name="Grimwood J."/>
            <person name="Davis R.W."/>
            <person name="Stephens R.S."/>
        </authorList>
    </citation>
    <scope>NUCLEOTIDE SEQUENCE [LARGE SCALE GENOMIC DNA]</scope>
    <source>
        <strain>CWL029</strain>
    </source>
</reference>
<reference key="2">
    <citation type="journal article" date="2000" name="Nucleic Acids Res.">
        <title>Genome sequences of Chlamydia trachomatis MoPn and Chlamydia pneumoniae AR39.</title>
        <authorList>
            <person name="Read T.D."/>
            <person name="Brunham R.C."/>
            <person name="Shen C."/>
            <person name="Gill S.R."/>
            <person name="Heidelberg J.F."/>
            <person name="White O."/>
            <person name="Hickey E.K."/>
            <person name="Peterson J.D."/>
            <person name="Utterback T.R."/>
            <person name="Berry K.J."/>
            <person name="Bass S."/>
            <person name="Linher K.D."/>
            <person name="Weidman J.F."/>
            <person name="Khouri H.M."/>
            <person name="Craven B."/>
            <person name="Bowman C."/>
            <person name="Dodson R.J."/>
            <person name="Gwinn M.L."/>
            <person name="Nelson W.C."/>
            <person name="DeBoy R.T."/>
            <person name="Kolonay J.F."/>
            <person name="McClarty G."/>
            <person name="Salzberg S.L."/>
            <person name="Eisen J.A."/>
            <person name="Fraser C.M."/>
        </authorList>
    </citation>
    <scope>NUCLEOTIDE SEQUENCE [LARGE SCALE GENOMIC DNA]</scope>
    <source>
        <strain>AR39</strain>
    </source>
</reference>
<reference key="3">
    <citation type="journal article" date="2000" name="Nucleic Acids Res.">
        <title>Comparison of whole genome sequences of Chlamydia pneumoniae J138 from Japan and CWL029 from USA.</title>
        <authorList>
            <person name="Shirai M."/>
            <person name="Hirakawa H."/>
            <person name="Kimoto M."/>
            <person name="Tabuchi M."/>
            <person name="Kishi F."/>
            <person name="Ouchi K."/>
            <person name="Shiba T."/>
            <person name="Ishii K."/>
            <person name="Hattori M."/>
            <person name="Kuhara S."/>
            <person name="Nakazawa T."/>
        </authorList>
    </citation>
    <scope>NUCLEOTIDE SEQUENCE [LARGE SCALE GENOMIC DNA]</scope>
    <source>
        <strain>J138</strain>
    </source>
</reference>
<reference key="4">
    <citation type="submission" date="2002-05" db="EMBL/GenBank/DDBJ databases">
        <title>The genome sequence of Chlamydia pneumoniae TW183 and comparison with other Chlamydia strains based on whole genome sequence analysis.</title>
        <authorList>
            <person name="Geng M.M."/>
            <person name="Schuhmacher A."/>
            <person name="Muehldorfer I."/>
            <person name="Bensch K.W."/>
            <person name="Schaefer K.P."/>
            <person name="Schneider S."/>
            <person name="Pohl T."/>
            <person name="Essig A."/>
            <person name="Marre R."/>
            <person name="Melchers K."/>
        </authorList>
    </citation>
    <scope>NUCLEOTIDE SEQUENCE [LARGE SCALE GENOMIC DNA]</scope>
    <source>
        <strain>TW-183</strain>
    </source>
</reference>
<gene>
    <name type="ordered locus">CPn_0885</name>
    <name type="ordered locus">CP_0981</name>
    <name type="ordered locus">CPj0885</name>
    <name type="ordered locus">CpB0914</name>
</gene>
<evidence type="ECO:0000250" key="1"/>
<evidence type="ECO:0000255" key="2">
    <source>
        <dbReference type="PROSITE-ProRule" id="PRU01024"/>
    </source>
</evidence>
<evidence type="ECO:0000305" key="3"/>
<comment type="similarity">
    <text evidence="2">Belongs to the class I-like SAM-binding methyltransferase superfamily. RNA M5U methyltransferase family.</text>
</comment>
<proteinExistence type="inferred from homology"/>
<accession>Q9Z721</accession>
<accession>Q9JS05</accession>
<dbReference type="EC" id="2.1.1.-"/>
<dbReference type="EMBL" id="AE001363">
    <property type="protein sequence ID" value="AAD19023.1"/>
    <property type="molecule type" value="Genomic_DNA"/>
</dbReference>
<dbReference type="EMBL" id="AE002161">
    <property type="protein sequence ID" value="AAF73721.1"/>
    <property type="molecule type" value="Genomic_DNA"/>
</dbReference>
<dbReference type="EMBL" id="BA000008">
    <property type="protein sequence ID" value="BAA99093.1"/>
    <property type="molecule type" value="Genomic_DNA"/>
</dbReference>
<dbReference type="EMBL" id="AE009440">
    <property type="protein sequence ID" value="AAP98843.1"/>
    <property type="molecule type" value="Genomic_DNA"/>
</dbReference>
<dbReference type="PIR" id="A72023">
    <property type="entry name" value="A72023"/>
</dbReference>
<dbReference type="PIR" id="C86601">
    <property type="entry name" value="C86601"/>
</dbReference>
<dbReference type="RefSeq" id="NP_225080.1">
    <property type="nucleotide sequence ID" value="NC_000922.1"/>
</dbReference>
<dbReference type="SMR" id="Q9Z721"/>
<dbReference type="STRING" id="406984.CPK_ORF00294"/>
<dbReference type="GeneID" id="45050940"/>
<dbReference type="KEGG" id="cpa:CP_0981"/>
<dbReference type="KEGG" id="cpj:ygcA"/>
<dbReference type="KEGG" id="cpn:CPn_0885"/>
<dbReference type="KEGG" id="cpt:CpB0914"/>
<dbReference type="PATRIC" id="fig|115713.3.peg.966"/>
<dbReference type="eggNOG" id="COG2265">
    <property type="taxonomic scope" value="Bacteria"/>
</dbReference>
<dbReference type="HOGENOM" id="CLU_014689_7_2_0"/>
<dbReference type="OrthoDB" id="9804590at2"/>
<dbReference type="Proteomes" id="UP000000583">
    <property type="component" value="Chromosome"/>
</dbReference>
<dbReference type="Proteomes" id="UP000000801">
    <property type="component" value="Chromosome"/>
</dbReference>
<dbReference type="GO" id="GO:0051539">
    <property type="term" value="F:4 iron, 4 sulfur cluster binding"/>
    <property type="evidence" value="ECO:0007669"/>
    <property type="project" value="UniProtKB-KW"/>
</dbReference>
<dbReference type="GO" id="GO:0046872">
    <property type="term" value="F:metal ion binding"/>
    <property type="evidence" value="ECO:0007669"/>
    <property type="project" value="UniProtKB-KW"/>
</dbReference>
<dbReference type="GO" id="GO:0070041">
    <property type="term" value="F:rRNA (uridine-C5-)-methyltransferase activity"/>
    <property type="evidence" value="ECO:0007669"/>
    <property type="project" value="TreeGrafter"/>
</dbReference>
<dbReference type="GO" id="GO:0070475">
    <property type="term" value="P:rRNA base methylation"/>
    <property type="evidence" value="ECO:0007669"/>
    <property type="project" value="TreeGrafter"/>
</dbReference>
<dbReference type="CDD" id="cd02440">
    <property type="entry name" value="AdoMet_MTases"/>
    <property type="match status" value="1"/>
</dbReference>
<dbReference type="Gene3D" id="2.40.50.1070">
    <property type="match status" value="1"/>
</dbReference>
<dbReference type="Gene3D" id="3.40.50.150">
    <property type="entry name" value="Vaccinia Virus protein VP39"/>
    <property type="match status" value="1"/>
</dbReference>
<dbReference type="InterPro" id="IPR030390">
    <property type="entry name" value="MeTrfase_TrmA_AS"/>
</dbReference>
<dbReference type="InterPro" id="IPR030391">
    <property type="entry name" value="MeTrfase_TrmA_CS"/>
</dbReference>
<dbReference type="InterPro" id="IPR029063">
    <property type="entry name" value="SAM-dependent_MTases_sf"/>
</dbReference>
<dbReference type="InterPro" id="IPR010280">
    <property type="entry name" value="U5_MeTrfase_fam"/>
</dbReference>
<dbReference type="NCBIfam" id="TIGR00479">
    <property type="entry name" value="rumA"/>
    <property type="match status" value="1"/>
</dbReference>
<dbReference type="PANTHER" id="PTHR11061">
    <property type="entry name" value="RNA M5U METHYLTRANSFERASE"/>
    <property type="match status" value="1"/>
</dbReference>
<dbReference type="PANTHER" id="PTHR11061:SF30">
    <property type="entry name" value="TRNA (URACIL(54)-C(5))-METHYLTRANSFERASE"/>
    <property type="match status" value="1"/>
</dbReference>
<dbReference type="Pfam" id="PF05958">
    <property type="entry name" value="tRNA_U5-meth_tr"/>
    <property type="match status" value="1"/>
</dbReference>
<dbReference type="SUPFAM" id="SSF53335">
    <property type="entry name" value="S-adenosyl-L-methionine-dependent methyltransferases"/>
    <property type="match status" value="1"/>
</dbReference>
<dbReference type="PROSITE" id="PS51687">
    <property type="entry name" value="SAM_MT_RNA_M5U"/>
    <property type="match status" value="1"/>
</dbReference>
<dbReference type="PROSITE" id="PS01230">
    <property type="entry name" value="TRMA_1"/>
    <property type="match status" value="1"/>
</dbReference>
<dbReference type="PROSITE" id="PS01231">
    <property type="entry name" value="TRMA_2"/>
    <property type="match status" value="1"/>
</dbReference>
<protein>
    <recommendedName>
        <fullName>Uncharacterized RNA methyltransferase CPn_0885/CP_0981/CPj0885/CpB0914</fullName>
        <ecNumber>2.1.1.-</ecNumber>
    </recommendedName>
</protein>
<feature type="chain" id="PRO_0000161965" description="Uncharacterized RNA methyltransferase CPn_0885/CP_0981/CPj0885/CpB0914">
    <location>
        <begin position="1"/>
        <end position="401"/>
    </location>
</feature>
<feature type="active site" description="Nucleophile" evidence="2">
    <location>
        <position position="355"/>
    </location>
</feature>
<feature type="binding site" evidence="1">
    <location>
        <position position="7"/>
    </location>
    <ligand>
        <name>[4Fe-4S] cluster</name>
        <dbReference type="ChEBI" id="CHEBI:49883"/>
    </ligand>
</feature>
<feature type="binding site" evidence="1">
    <location>
        <position position="13"/>
    </location>
    <ligand>
        <name>[4Fe-4S] cluster</name>
        <dbReference type="ChEBI" id="CHEBI:49883"/>
    </ligand>
</feature>
<feature type="binding site" evidence="1">
    <location>
        <position position="16"/>
    </location>
    <ligand>
        <name>[4Fe-4S] cluster</name>
        <dbReference type="ChEBI" id="CHEBI:49883"/>
    </ligand>
</feature>
<feature type="binding site" evidence="1">
    <location>
        <position position="94"/>
    </location>
    <ligand>
        <name>[4Fe-4S] cluster</name>
        <dbReference type="ChEBI" id="CHEBI:49883"/>
    </ligand>
</feature>
<feature type="binding site" evidence="2">
    <location>
        <position position="230"/>
    </location>
    <ligand>
        <name>S-adenosyl-L-methionine</name>
        <dbReference type="ChEBI" id="CHEBI:59789"/>
    </ligand>
</feature>
<feature type="binding site" evidence="2">
    <location>
        <position position="259"/>
    </location>
    <ligand>
        <name>S-adenosyl-L-methionine</name>
        <dbReference type="ChEBI" id="CHEBI:59789"/>
    </ligand>
</feature>
<feature type="binding site" evidence="2">
    <location>
        <position position="280"/>
    </location>
    <ligand>
        <name>S-adenosyl-L-methionine</name>
        <dbReference type="ChEBI" id="CHEBI:59789"/>
    </ligand>
</feature>
<feature type="binding site" evidence="2">
    <location>
        <position position="328"/>
    </location>
    <ligand>
        <name>S-adenosyl-L-methionine</name>
        <dbReference type="ChEBI" id="CHEBI:59789"/>
    </ligand>
</feature>
<feature type="sequence conflict" description="In Ref. 1; AAD19023." evidence="3" ref="1">
    <original>L</original>
    <variation>P</variation>
    <location>
        <position position="401"/>
    </location>
</feature>
<name>Y885_CHLPN</name>